<keyword id="KW-0560">Oxidoreductase</keyword>
<accession>B0RBB1</accession>
<evidence type="ECO:0000255" key="1">
    <source>
        <dbReference type="HAMAP-Rule" id="MF_01401"/>
    </source>
</evidence>
<gene>
    <name evidence="1" type="primary">msrA</name>
    <name type="ordered locus">CMS1542</name>
</gene>
<sequence>MQTFILAGGCFWCLDAVYRTLDGVQDVISGYIGGHTAHPSYDAVCTGATGHAEAVKVVFDEEVIPADVILDVFFTLHDPRQLNRQGADVGTQYRSAMFPADAEQEQLFRDAIARAGDLLDGTPVTTIEPLGTWHDAEDYHQDFFAKNPGQGYCNAVAVPKVNKVRKSFAQYVRAA</sequence>
<proteinExistence type="inferred from homology"/>
<organism>
    <name type="scientific">Clavibacter sepedonicus</name>
    <name type="common">Clavibacter michiganensis subsp. sepedonicus</name>
    <dbReference type="NCBI Taxonomy" id="31964"/>
    <lineage>
        <taxon>Bacteria</taxon>
        <taxon>Bacillati</taxon>
        <taxon>Actinomycetota</taxon>
        <taxon>Actinomycetes</taxon>
        <taxon>Micrococcales</taxon>
        <taxon>Microbacteriaceae</taxon>
        <taxon>Clavibacter</taxon>
    </lineage>
</organism>
<reference key="1">
    <citation type="journal article" date="2008" name="J. Bacteriol.">
        <title>Genome of the actinomycete plant pathogen Clavibacter michiganensis subsp. sepedonicus suggests recent niche adaptation.</title>
        <authorList>
            <person name="Bentley S.D."/>
            <person name="Corton C."/>
            <person name="Brown S.E."/>
            <person name="Barron A."/>
            <person name="Clark L."/>
            <person name="Doggett J."/>
            <person name="Harris B."/>
            <person name="Ormond D."/>
            <person name="Quail M.A."/>
            <person name="May G."/>
            <person name="Francis D."/>
            <person name="Knudson D."/>
            <person name="Parkhill J."/>
            <person name="Ishimaru C.A."/>
        </authorList>
    </citation>
    <scope>NUCLEOTIDE SEQUENCE [LARGE SCALE GENOMIC DNA]</scope>
    <source>
        <strain>ATCC 33113 / DSM 20744 / JCM 9667 / LMG 2889 / ICMP 2535 / C-1</strain>
    </source>
</reference>
<name>MSRA_CLASE</name>
<protein>
    <recommendedName>
        <fullName evidence="1">Peptide methionine sulfoxide reductase MsrA</fullName>
        <shortName evidence="1">Protein-methionine-S-oxide reductase</shortName>
        <ecNumber evidence="1">1.8.4.11</ecNumber>
    </recommendedName>
    <alternativeName>
        <fullName evidence="1">Peptide-methionine (S)-S-oxide reductase</fullName>
        <shortName evidence="1">Peptide Met(O) reductase</shortName>
    </alternativeName>
</protein>
<comment type="function">
    <text evidence="1">Has an important function as a repair enzyme for proteins that have been inactivated by oxidation. Catalyzes the reversible oxidation-reduction of methionine sulfoxide in proteins to methionine.</text>
</comment>
<comment type="catalytic activity">
    <reaction evidence="1">
        <text>L-methionyl-[protein] + [thioredoxin]-disulfide + H2O = L-methionyl-(S)-S-oxide-[protein] + [thioredoxin]-dithiol</text>
        <dbReference type="Rhea" id="RHEA:14217"/>
        <dbReference type="Rhea" id="RHEA-COMP:10698"/>
        <dbReference type="Rhea" id="RHEA-COMP:10700"/>
        <dbReference type="Rhea" id="RHEA-COMP:12313"/>
        <dbReference type="Rhea" id="RHEA-COMP:12315"/>
        <dbReference type="ChEBI" id="CHEBI:15377"/>
        <dbReference type="ChEBI" id="CHEBI:16044"/>
        <dbReference type="ChEBI" id="CHEBI:29950"/>
        <dbReference type="ChEBI" id="CHEBI:44120"/>
        <dbReference type="ChEBI" id="CHEBI:50058"/>
        <dbReference type="EC" id="1.8.4.11"/>
    </reaction>
</comment>
<comment type="catalytic activity">
    <reaction evidence="1">
        <text>[thioredoxin]-disulfide + L-methionine + H2O = L-methionine (S)-S-oxide + [thioredoxin]-dithiol</text>
        <dbReference type="Rhea" id="RHEA:19993"/>
        <dbReference type="Rhea" id="RHEA-COMP:10698"/>
        <dbReference type="Rhea" id="RHEA-COMP:10700"/>
        <dbReference type="ChEBI" id="CHEBI:15377"/>
        <dbReference type="ChEBI" id="CHEBI:29950"/>
        <dbReference type="ChEBI" id="CHEBI:50058"/>
        <dbReference type="ChEBI" id="CHEBI:57844"/>
        <dbReference type="ChEBI" id="CHEBI:58772"/>
        <dbReference type="EC" id="1.8.4.11"/>
    </reaction>
</comment>
<comment type="similarity">
    <text evidence="1">Belongs to the MsrA Met sulfoxide reductase family.</text>
</comment>
<dbReference type="EC" id="1.8.4.11" evidence="1"/>
<dbReference type="EMBL" id="AM849034">
    <property type="protein sequence ID" value="CAQ01652.1"/>
    <property type="molecule type" value="Genomic_DNA"/>
</dbReference>
<dbReference type="RefSeq" id="WP_012298913.1">
    <property type="nucleotide sequence ID" value="NZ_MZMN01000003.1"/>
</dbReference>
<dbReference type="SMR" id="B0RBB1"/>
<dbReference type="STRING" id="31964.CMS1542"/>
<dbReference type="KEGG" id="cms:CMS1542"/>
<dbReference type="eggNOG" id="COG0225">
    <property type="taxonomic scope" value="Bacteria"/>
</dbReference>
<dbReference type="HOGENOM" id="CLU_031040_10_0_11"/>
<dbReference type="OrthoDB" id="4174719at2"/>
<dbReference type="Proteomes" id="UP000001318">
    <property type="component" value="Chromosome"/>
</dbReference>
<dbReference type="GO" id="GO:0033744">
    <property type="term" value="F:L-methionine:thioredoxin-disulfide S-oxidoreductase activity"/>
    <property type="evidence" value="ECO:0007669"/>
    <property type="project" value="RHEA"/>
</dbReference>
<dbReference type="GO" id="GO:0008113">
    <property type="term" value="F:peptide-methionine (S)-S-oxide reductase activity"/>
    <property type="evidence" value="ECO:0007669"/>
    <property type="project" value="UniProtKB-UniRule"/>
</dbReference>
<dbReference type="GO" id="GO:0036211">
    <property type="term" value="P:protein modification process"/>
    <property type="evidence" value="ECO:0007669"/>
    <property type="project" value="UniProtKB-UniRule"/>
</dbReference>
<dbReference type="Gene3D" id="3.30.1060.10">
    <property type="entry name" value="Peptide methionine sulphoxide reductase MsrA"/>
    <property type="match status" value="1"/>
</dbReference>
<dbReference type="HAMAP" id="MF_01401">
    <property type="entry name" value="MsrA"/>
    <property type="match status" value="1"/>
</dbReference>
<dbReference type="InterPro" id="IPR002569">
    <property type="entry name" value="Met_Sox_Rdtase_MsrA_dom"/>
</dbReference>
<dbReference type="InterPro" id="IPR036509">
    <property type="entry name" value="Met_Sox_Rdtase_MsrA_sf"/>
</dbReference>
<dbReference type="NCBIfam" id="TIGR00401">
    <property type="entry name" value="msrA"/>
    <property type="match status" value="1"/>
</dbReference>
<dbReference type="PANTHER" id="PTHR43774">
    <property type="entry name" value="PEPTIDE METHIONINE SULFOXIDE REDUCTASE"/>
    <property type="match status" value="1"/>
</dbReference>
<dbReference type="PANTHER" id="PTHR43774:SF1">
    <property type="entry name" value="PEPTIDE METHIONINE SULFOXIDE REDUCTASE MSRA 2"/>
    <property type="match status" value="1"/>
</dbReference>
<dbReference type="Pfam" id="PF01625">
    <property type="entry name" value="PMSR"/>
    <property type="match status" value="1"/>
</dbReference>
<dbReference type="SUPFAM" id="SSF55068">
    <property type="entry name" value="Peptide methionine sulfoxide reductase"/>
    <property type="match status" value="1"/>
</dbReference>
<feature type="chain" id="PRO_1000087347" description="Peptide methionine sulfoxide reductase MsrA">
    <location>
        <begin position="1"/>
        <end position="175"/>
    </location>
</feature>
<feature type="active site" evidence="1">
    <location>
        <position position="10"/>
    </location>
</feature>